<protein>
    <recommendedName>
        <fullName evidence="10">Cationic amino acid transporter 2</fullName>
        <shortName>CAT-2</shortName>
        <shortName>CAT2</shortName>
    </recommendedName>
    <alternativeName>
        <fullName>Low affinity cationic amino acid transporter 2</fullName>
    </alternativeName>
    <alternativeName>
        <fullName>Solute carrier family 7 member 2</fullName>
    </alternativeName>
</protein>
<comment type="function">
    <text evidence="1 4 6">Functions as a permease involved in the transport of the cationic amino acids (L-arginine, L-lysine, L-ornithine and L-homoarginine); the affinity for its substrates differs between isoforms created by alternative splicing (PubMed:28684763, PubMed:9174363). May play a role in classical or alternative activation of macrophages via its role in arginine transport (By similarity).</text>
</comment>
<comment type="function">
    <molecule>Isoform 1</molecule>
    <text evidence="4 6">Functions as a permease that mediates the transport of the cationic amino acids (L-arginine, L-lysine, L-ornithine and L-homoarginine). Shows a much higher affinity for L-arginine and L-homoarginine than isoform 2.</text>
</comment>
<comment type="function">
    <molecule>Isoform 2</molecule>
    <text evidence="4 6">Functions as a low-affinity, high capacity permease involved in the transport of the cationic amino acids (L-arginine, L-lysine, L-ornithine and L-homoarginine).</text>
</comment>
<comment type="catalytic activity">
    <molecule>Isoform 1</molecule>
    <reaction evidence="6">
        <text>L-arginine(in) = L-arginine(out)</text>
        <dbReference type="Rhea" id="RHEA:32143"/>
        <dbReference type="ChEBI" id="CHEBI:32682"/>
    </reaction>
</comment>
<comment type="catalytic activity">
    <molecule>Isoform 2</molecule>
    <reaction evidence="6">
        <text>L-arginine(in) = L-arginine(out)</text>
        <dbReference type="Rhea" id="RHEA:32143"/>
        <dbReference type="ChEBI" id="CHEBI:32682"/>
    </reaction>
</comment>
<comment type="catalytic activity">
    <reaction evidence="1">
        <text>L-lysine(in) = L-lysine(out)</text>
        <dbReference type="Rhea" id="RHEA:70935"/>
        <dbReference type="ChEBI" id="CHEBI:32551"/>
    </reaction>
</comment>
<comment type="catalytic activity">
    <reaction evidence="1">
        <text>L-ornithine(in) = L-ornithine(out)</text>
        <dbReference type="Rhea" id="RHEA:71199"/>
        <dbReference type="ChEBI" id="CHEBI:46911"/>
    </reaction>
</comment>
<comment type="catalytic activity">
    <molecule>Isoform 1</molecule>
    <reaction evidence="4">
        <text>L-homoarginine(in) = L-homoarginine(out)</text>
        <dbReference type="Rhea" id="RHEA:71203"/>
        <dbReference type="ChEBI" id="CHEBI:143006"/>
    </reaction>
</comment>
<comment type="catalytic activity">
    <molecule>Isoform 2</molecule>
    <reaction evidence="4">
        <text>L-homoarginine(in) = L-homoarginine(out)</text>
        <dbReference type="Rhea" id="RHEA:71203"/>
        <dbReference type="ChEBI" id="CHEBI:143006"/>
    </reaction>
</comment>
<comment type="biophysicochemical properties">
    <molecule>Isoform 1</molecule>
    <kinetics>
        <KM evidence="6">0.32 mM for L-arginine</KM>
        <KM evidence="4">0.523 mM for L-homoarginine</KM>
        <Vmax evidence="4">11.0 nmol/min/mg enzyme for L-homoarginine uptake</Vmax>
    </kinetics>
    <phDependence>
        <text evidence="6">Optimum pH is 7.5 for L-arginine transport.</text>
    </phDependence>
</comment>
<comment type="biophysicochemical properties">
    <molecule>Isoform 2</molecule>
    <kinetics>
        <KM evidence="6">3.36 mM for L-arginine</KM>
        <text evidence="4">In contrast with isoform 1, saturation of L-homoarginine uptake could not be reached.</text>
    </kinetics>
    <phDependence>
        <text evidence="6">Optimum pH is 7-8.5 for L-arginine transport.</text>
    </phDependence>
</comment>
<comment type="subcellular location">
    <subcellularLocation>
        <location evidence="6">Cell membrane</location>
        <topology evidence="6">Multi-pass membrane protein</topology>
    </subcellularLocation>
</comment>
<comment type="alternative products">
    <event type="alternative splicing"/>
    <isoform>
        <id>P52569-1</id>
        <name>1</name>
        <name evidence="9">CAT-2B</name>
        <name evidence="4">CAT2B</name>
        <name evidence="4">SLC7A2B</name>
        <sequence type="displayed"/>
    </isoform>
    <isoform>
        <id>P52569-2</id>
        <name>2</name>
        <name evidence="9">CAT-2A</name>
        <name evidence="4">CAT2A</name>
        <name evidence="4">SLC7A2A</name>
        <sequence type="described" ref="VSP_037354 VSP_023354"/>
    </isoform>
    <isoform>
        <id>P52569-3</id>
        <name>3</name>
        <sequence type="described" ref="VSP_037354"/>
    </isoform>
</comment>
<comment type="tissue specificity">
    <text evidence="5">Expressed at high levels in the skeletal muscle, placenta and ovary. Expressed at intermediate levels in the liver and pancreas and at low levels in the kidney and heart.</text>
</comment>
<comment type="similarity">
    <text evidence="10">Belongs to the amino acid-polyamine-organocation (APC) superfamily. Cationic amino acid transporter (CAT) (TC 2.A.3.3) family.</text>
</comment>
<comment type="sequence caution" evidence="10">
    <conflict type="erroneous initiation">
        <sequence resource="EMBL-CDS" id="AAH69648"/>
    </conflict>
    <text>Truncated N-terminus.</text>
</comment>
<comment type="sequence caution" evidence="10">
    <conflict type="erroneous initiation">
        <sequence resource="EMBL-CDS" id="AAI04906"/>
    </conflict>
    <text>Truncated N-terminus.</text>
</comment>
<comment type="sequence caution" evidence="10">
    <conflict type="erroneous initiation">
        <sequence resource="EMBL-CDS" id="AAI13662"/>
    </conflict>
    <text>Truncated N-terminus.</text>
</comment>
<comment type="sequence caution" evidence="10">
    <conflict type="erroneous initiation">
        <sequence resource="EMBL-CDS" id="AAI43584"/>
    </conflict>
    <text>Truncated N-terminus.</text>
</comment>
<comment type="sequence caution" evidence="10">
    <molecule>Isoform 2</molecule>
    <conflict type="frameshift">
        <sequence resource="EMBL-CDS" id="AAB62810"/>
    </conflict>
</comment>
<dbReference type="EMBL" id="D29990">
    <property type="protein sequence ID" value="BAA06271.1"/>
    <property type="molecule type" value="mRNA"/>
</dbReference>
<dbReference type="EMBL" id="U76368">
    <property type="protein sequence ID" value="AAB62810.1"/>
    <property type="status" value="ALT_FRAME"/>
    <property type="molecule type" value="mRNA"/>
</dbReference>
<dbReference type="EMBL" id="U76369">
    <property type="protein sequence ID" value="AAB62811.1"/>
    <property type="molecule type" value="mRNA"/>
</dbReference>
<dbReference type="EMBL" id="AB020863">
    <property type="status" value="NOT_ANNOTATED_CDS"/>
    <property type="molecule type" value="Genomic_DNA"/>
</dbReference>
<dbReference type="EMBL" id="CH471080">
    <property type="protein sequence ID" value="EAW63813.1"/>
    <property type="molecule type" value="Genomic_DNA"/>
</dbReference>
<dbReference type="EMBL" id="BC069648">
    <property type="protein sequence ID" value="AAH69648.1"/>
    <property type="status" value="ALT_INIT"/>
    <property type="molecule type" value="mRNA"/>
</dbReference>
<dbReference type="EMBL" id="BC104905">
    <property type="protein sequence ID" value="AAI04906.1"/>
    <property type="status" value="ALT_INIT"/>
    <property type="molecule type" value="mRNA"/>
</dbReference>
<dbReference type="EMBL" id="BC113661">
    <property type="protein sequence ID" value="AAI13662.1"/>
    <property type="status" value="ALT_INIT"/>
    <property type="molecule type" value="mRNA"/>
</dbReference>
<dbReference type="EMBL" id="BC143583">
    <property type="protein sequence ID" value="AAI43584.1"/>
    <property type="status" value="ALT_INIT"/>
    <property type="molecule type" value="mRNA"/>
</dbReference>
<dbReference type="EMBL" id="AL832016">
    <property type="protein sequence ID" value="CAD89909.1"/>
    <property type="molecule type" value="mRNA"/>
</dbReference>
<dbReference type="CCDS" id="CCDS34852.1">
    <molecule id="P52569-1"/>
</dbReference>
<dbReference type="CCDS" id="CCDS55203.1">
    <molecule id="P52569-3"/>
</dbReference>
<dbReference type="CCDS" id="CCDS6002.2">
    <molecule id="P52569-2"/>
</dbReference>
<dbReference type="RefSeq" id="NP_001008539.3">
    <molecule id="P52569-1"/>
    <property type="nucleotide sequence ID" value="NM_001008539.4"/>
</dbReference>
<dbReference type="RefSeq" id="NP_001158243.1">
    <molecule id="P52569-3"/>
    <property type="nucleotide sequence ID" value="NM_001164771.2"/>
</dbReference>
<dbReference type="RefSeq" id="NP_001357267.1">
    <molecule id="P52569-1"/>
    <property type="nucleotide sequence ID" value="NM_001370338.1"/>
</dbReference>
<dbReference type="RefSeq" id="NP_003037.4">
    <molecule id="P52569-2"/>
    <property type="nucleotide sequence ID" value="NM_003046.6"/>
</dbReference>
<dbReference type="RefSeq" id="XP_005273667.1">
    <property type="nucleotide sequence ID" value="XM_005273610.4"/>
</dbReference>
<dbReference type="RefSeq" id="XP_005273668.1">
    <molecule id="P52569-1"/>
    <property type="nucleotide sequence ID" value="XM_005273611.5"/>
</dbReference>
<dbReference type="RefSeq" id="XP_005273669.1">
    <molecule id="P52569-1"/>
    <property type="nucleotide sequence ID" value="XM_005273612.5"/>
</dbReference>
<dbReference type="RefSeq" id="XP_016869235.1">
    <molecule id="P52569-1"/>
    <property type="nucleotide sequence ID" value="XM_017013746.2"/>
</dbReference>
<dbReference type="RefSeq" id="XP_016869236.1">
    <property type="nucleotide sequence ID" value="XM_017013747.1"/>
</dbReference>
<dbReference type="RefSeq" id="XP_047278069.1">
    <molecule id="P52569-1"/>
    <property type="nucleotide sequence ID" value="XM_047422113.1"/>
</dbReference>
<dbReference type="RefSeq" id="XP_047278070.1">
    <molecule id="P52569-1"/>
    <property type="nucleotide sequence ID" value="XM_047422114.1"/>
</dbReference>
<dbReference type="RefSeq" id="XP_054217003.1">
    <molecule id="P52569-1"/>
    <property type="nucleotide sequence ID" value="XM_054361028.1"/>
</dbReference>
<dbReference type="RefSeq" id="XP_054217004.1">
    <molecule id="P52569-1"/>
    <property type="nucleotide sequence ID" value="XM_054361029.1"/>
</dbReference>
<dbReference type="RefSeq" id="XP_054217005.1">
    <molecule id="P52569-1"/>
    <property type="nucleotide sequence ID" value="XM_054361030.1"/>
</dbReference>
<dbReference type="SMR" id="P52569"/>
<dbReference type="BioGRID" id="112433">
    <property type="interactions" value="110"/>
</dbReference>
<dbReference type="FunCoup" id="P52569">
    <property type="interactions" value="793"/>
</dbReference>
<dbReference type="IntAct" id="P52569">
    <property type="interactions" value="62"/>
</dbReference>
<dbReference type="MINT" id="P52569"/>
<dbReference type="STRING" id="9606.ENSP00000004531"/>
<dbReference type="DrugBank" id="DB00123">
    <property type="generic name" value="Lysine"/>
</dbReference>
<dbReference type="DrugBank" id="DB00129">
    <property type="generic name" value="Ornithine"/>
</dbReference>
<dbReference type="TCDB" id="2.A.3.3.8">
    <property type="family name" value="the amino acid-polyamine-organocation (apc) family"/>
</dbReference>
<dbReference type="GlyCosmos" id="P52569">
    <property type="glycosylation" value="3 sites, No reported glycans"/>
</dbReference>
<dbReference type="GlyGen" id="P52569">
    <property type="glycosylation" value="4 sites, 1 N-linked glycan (1 site)"/>
</dbReference>
<dbReference type="iPTMnet" id="P52569"/>
<dbReference type="PhosphoSitePlus" id="P52569"/>
<dbReference type="SwissPalm" id="P52569"/>
<dbReference type="BioMuta" id="SLC7A2"/>
<dbReference type="DMDM" id="126302539"/>
<dbReference type="jPOST" id="P52569"/>
<dbReference type="MassIVE" id="P52569"/>
<dbReference type="PaxDb" id="9606-ENSP00000004531"/>
<dbReference type="PeptideAtlas" id="P52569"/>
<dbReference type="ProteomicsDB" id="56491">
    <molecule id="P52569-1"/>
</dbReference>
<dbReference type="ProteomicsDB" id="56492">
    <molecule id="P52569-2"/>
</dbReference>
<dbReference type="ProteomicsDB" id="56493">
    <molecule id="P52569-3"/>
</dbReference>
<dbReference type="Pumba" id="P52569"/>
<dbReference type="Antibodypedia" id="2114">
    <property type="antibodies" value="113 antibodies from 24 providers"/>
</dbReference>
<dbReference type="DNASU" id="6542"/>
<dbReference type="Ensembl" id="ENST00000004531.14">
    <molecule id="P52569-3"/>
    <property type="protein sequence ID" value="ENSP00000004531.10"/>
    <property type="gene ID" value="ENSG00000003989.18"/>
</dbReference>
<dbReference type="Ensembl" id="ENST00000398090.3">
    <molecule id="P52569-2"/>
    <property type="protein sequence ID" value="ENSP00000381164.3"/>
    <property type="gene ID" value="ENSG00000003989.18"/>
</dbReference>
<dbReference type="Ensembl" id="ENST00000494857.6">
    <molecule id="P52569-1"/>
    <property type="protein sequence ID" value="ENSP00000419140.2"/>
    <property type="gene ID" value="ENSG00000003989.18"/>
</dbReference>
<dbReference type="Ensembl" id="ENST00000522656.5">
    <molecule id="P52569-1"/>
    <property type="protein sequence ID" value="ENSP00000430464.1"/>
    <property type="gene ID" value="ENSG00000003989.18"/>
</dbReference>
<dbReference type="Ensembl" id="ENST00000640220.1">
    <molecule id="P52569-1"/>
    <property type="protein sequence ID" value="ENSP00000492016.2"/>
    <property type="gene ID" value="ENSG00000003989.18"/>
</dbReference>
<dbReference type="GeneID" id="6542"/>
<dbReference type="KEGG" id="hsa:6542"/>
<dbReference type="MANE-Select" id="ENST00000494857.6">
    <property type="protein sequence ID" value="ENSP00000419140.2"/>
    <property type="RefSeq nucleotide sequence ID" value="NM_001370338.1"/>
    <property type="RefSeq protein sequence ID" value="NP_001357267.1"/>
</dbReference>
<dbReference type="UCSC" id="uc011kyc.3">
    <molecule id="P52569-1"/>
    <property type="organism name" value="human"/>
</dbReference>
<dbReference type="AGR" id="HGNC:11060"/>
<dbReference type="CTD" id="6542"/>
<dbReference type="DisGeNET" id="6542"/>
<dbReference type="GeneCards" id="SLC7A2"/>
<dbReference type="HGNC" id="HGNC:11060">
    <property type="gene designation" value="SLC7A2"/>
</dbReference>
<dbReference type="HPA" id="ENSG00000003989">
    <property type="expression patterns" value="Tissue enhanced (liver, parathyroid gland)"/>
</dbReference>
<dbReference type="MIM" id="601872">
    <property type="type" value="gene"/>
</dbReference>
<dbReference type="neXtProt" id="NX_P52569"/>
<dbReference type="OpenTargets" id="ENSG00000003989"/>
<dbReference type="PharmGKB" id="PA35920"/>
<dbReference type="VEuPathDB" id="HostDB:ENSG00000003989"/>
<dbReference type="eggNOG" id="KOG1286">
    <property type="taxonomic scope" value="Eukaryota"/>
</dbReference>
<dbReference type="GeneTree" id="ENSGT00940000160440"/>
<dbReference type="HOGENOM" id="CLU_007946_15_7_1"/>
<dbReference type="InParanoid" id="P52569"/>
<dbReference type="OMA" id="TRVWFSM"/>
<dbReference type="OrthoDB" id="3900342at2759"/>
<dbReference type="PAN-GO" id="P52569">
    <property type="GO annotations" value="5 GO annotations based on evolutionary models"/>
</dbReference>
<dbReference type="PhylomeDB" id="P52569"/>
<dbReference type="TreeFam" id="TF315212"/>
<dbReference type="PathwayCommons" id="P52569"/>
<dbReference type="Reactome" id="R-HSA-352230">
    <property type="pathway name" value="Amino acid transport across the plasma membrane"/>
</dbReference>
<dbReference type="SignaLink" id="P52569"/>
<dbReference type="BioGRID-ORCS" id="6542">
    <property type="hits" value="18 hits in 1162 CRISPR screens"/>
</dbReference>
<dbReference type="ChiTaRS" id="SLC7A2">
    <property type="organism name" value="human"/>
</dbReference>
<dbReference type="GeneWiki" id="SLC7A2"/>
<dbReference type="GenomeRNAi" id="6542"/>
<dbReference type="Pharos" id="P52569">
    <property type="development level" value="Tbio"/>
</dbReference>
<dbReference type="PRO" id="PR:P52569"/>
<dbReference type="Proteomes" id="UP000005640">
    <property type="component" value="Chromosome 8"/>
</dbReference>
<dbReference type="RNAct" id="P52569">
    <property type="molecule type" value="protein"/>
</dbReference>
<dbReference type="Bgee" id="ENSG00000003989">
    <property type="expression patterns" value="Expressed in skeletal muscle tissue of rectus abdominis and 160 other cell types or tissues"/>
</dbReference>
<dbReference type="ExpressionAtlas" id="P52569">
    <property type="expression patterns" value="baseline and differential"/>
</dbReference>
<dbReference type="GO" id="GO:0030054">
    <property type="term" value="C:cell junction"/>
    <property type="evidence" value="ECO:0000314"/>
    <property type="project" value="HPA"/>
</dbReference>
<dbReference type="GO" id="GO:0005886">
    <property type="term" value="C:plasma membrane"/>
    <property type="evidence" value="ECO:0000314"/>
    <property type="project" value="HPA"/>
</dbReference>
<dbReference type="GO" id="GO:0015171">
    <property type="term" value="F:amino acid transmembrane transporter activity"/>
    <property type="evidence" value="ECO:0000314"/>
    <property type="project" value="ARUK-UCL"/>
</dbReference>
<dbReference type="GO" id="GO:0015174">
    <property type="term" value="F:basic amino acid transmembrane transporter activity"/>
    <property type="evidence" value="ECO:0000304"/>
    <property type="project" value="ProtInc"/>
</dbReference>
<dbReference type="GO" id="GO:0015179">
    <property type="term" value="F:L-amino acid transmembrane transporter activity"/>
    <property type="evidence" value="ECO:0000314"/>
    <property type="project" value="ARUK-UCL"/>
</dbReference>
<dbReference type="GO" id="GO:0061459">
    <property type="term" value="F:L-arginine transmembrane transporter activity"/>
    <property type="evidence" value="ECO:0000314"/>
    <property type="project" value="UniProtKB"/>
</dbReference>
<dbReference type="GO" id="GO:0015189">
    <property type="term" value="F:L-lysine transmembrane transporter activity"/>
    <property type="evidence" value="ECO:0000318"/>
    <property type="project" value="GO_Central"/>
</dbReference>
<dbReference type="GO" id="GO:0000064">
    <property type="term" value="F:L-ornithine transmembrane transporter activity"/>
    <property type="evidence" value="ECO:0000318"/>
    <property type="project" value="GO_Central"/>
</dbReference>
<dbReference type="GO" id="GO:0089718">
    <property type="term" value="P:amino acid import across plasma membrane"/>
    <property type="evidence" value="ECO:0000314"/>
    <property type="project" value="ARUK-UCL"/>
</dbReference>
<dbReference type="GO" id="GO:0006865">
    <property type="term" value="P:amino acid transport"/>
    <property type="evidence" value="ECO:0000304"/>
    <property type="project" value="Reactome"/>
</dbReference>
<dbReference type="GO" id="GO:1902475">
    <property type="term" value="P:L-alpha-amino acid transmembrane transport"/>
    <property type="evidence" value="ECO:0000314"/>
    <property type="project" value="ARUK-UCL"/>
</dbReference>
<dbReference type="GO" id="GO:0015807">
    <property type="term" value="P:L-amino acid transport"/>
    <property type="evidence" value="ECO:0000314"/>
    <property type="project" value="ARUK-UCL"/>
</dbReference>
<dbReference type="GO" id="GO:0097638">
    <property type="term" value="P:L-arginine import across plasma membrane"/>
    <property type="evidence" value="ECO:0000314"/>
    <property type="project" value="ARUK-UCL"/>
</dbReference>
<dbReference type="GO" id="GO:1903826">
    <property type="term" value="P:L-arginine transmembrane transport"/>
    <property type="evidence" value="ECO:0000314"/>
    <property type="project" value="UniProtKB"/>
</dbReference>
<dbReference type="GO" id="GO:1903352">
    <property type="term" value="P:L-ornithine transmembrane transport"/>
    <property type="evidence" value="ECO:0000318"/>
    <property type="project" value="GO_Central"/>
</dbReference>
<dbReference type="GO" id="GO:0150104">
    <property type="term" value="P:transport across blood-brain barrier"/>
    <property type="evidence" value="ECO:0000303"/>
    <property type="project" value="ARUK-UCL"/>
</dbReference>
<dbReference type="FunFam" id="1.20.1740.10:FF:000034">
    <property type="entry name" value="cationic amino acid transporter 2 isoform X2"/>
    <property type="match status" value="1"/>
</dbReference>
<dbReference type="FunFam" id="1.20.1740.10:FF:000009">
    <property type="entry name" value="Low affinity cationic amino acid transporter 2"/>
    <property type="match status" value="1"/>
</dbReference>
<dbReference type="Gene3D" id="1.20.1740.10">
    <property type="entry name" value="Amino acid/polyamine transporter I"/>
    <property type="match status" value="2"/>
</dbReference>
<dbReference type="InterPro" id="IPR002293">
    <property type="entry name" value="AA/rel_permease1"/>
</dbReference>
<dbReference type="InterPro" id="IPR004755">
    <property type="entry name" value="Cat_AA_permease"/>
</dbReference>
<dbReference type="InterPro" id="IPR029485">
    <property type="entry name" value="CAT_C"/>
</dbReference>
<dbReference type="NCBIfam" id="TIGR00906">
    <property type="entry name" value="2A0303"/>
    <property type="match status" value="1"/>
</dbReference>
<dbReference type="PANTHER" id="PTHR43243:SF35">
    <property type="entry name" value="CATIONIC AMINO ACID TRANSPORTER 2"/>
    <property type="match status" value="1"/>
</dbReference>
<dbReference type="PANTHER" id="PTHR43243">
    <property type="entry name" value="INNER MEMBRANE TRANSPORTER YGJI-RELATED"/>
    <property type="match status" value="1"/>
</dbReference>
<dbReference type="Pfam" id="PF13520">
    <property type="entry name" value="AA_permease_2"/>
    <property type="match status" value="1"/>
</dbReference>
<dbReference type="Pfam" id="PF13906">
    <property type="entry name" value="AA_permease_C"/>
    <property type="match status" value="1"/>
</dbReference>
<reference key="1">
    <citation type="journal article" date="1996" name="Genomics">
        <title>Molecular cloning, tissue distribution, and chromosomal localization of human cationic amino acid transporter 2 (HCAT2).</title>
        <authorList>
            <person name="Hoshide R."/>
            <person name="Ikeda Y."/>
            <person name="Karashima S."/>
            <person name="Matsuura T."/>
            <person name="Komaki S."/>
            <person name="Kishino T."/>
            <person name="Niikawa N."/>
            <person name="Endo F."/>
            <person name="Matsuda I."/>
        </authorList>
    </citation>
    <scope>NUCLEOTIDE SEQUENCE [MRNA] (ISOFORM 1)</scope>
    <scope>TISSUE SPECIFICITY</scope>
    <source>
        <tissue>Intestine</tissue>
    </source>
</reference>
<reference key="2">
    <citation type="journal article" date="1997" name="Biochemistry">
        <title>Human cationic amino acid transporters hCAT-1, hCAT-2A, and hCAT-2B: three related carriers with distinct transport properties.</title>
        <authorList>
            <person name="Closs E.I."/>
            <person name="Graef P."/>
            <person name="Habermeier A."/>
            <person name="Cunningham J.M."/>
            <person name="Foerstermann U."/>
        </authorList>
    </citation>
    <scope>NUCLEOTIDE SEQUENCE [MRNA] (ISOFORM 2)</scope>
    <scope>NUCLEOTIDE SEQUENCE [MRNA] OF 337-469 (ISOFORM 1)</scope>
    <scope>FUNCTION</scope>
    <scope>SUBCELLULAR LOCATION</scope>
    <scope>VARIANT THR-531</scope>
    <scope>TRANSPORTER ACTIVITY</scope>
    <scope>BIOPHYSICOCHEMICAL PROPERTIES</scope>
    <source>
        <tissue>Liver</tissue>
    </source>
</reference>
<reference key="3">
    <citation type="journal article" date="2006" name="Nature">
        <title>DNA sequence and analysis of human chromosome 8.</title>
        <authorList>
            <person name="Nusbaum C."/>
            <person name="Mikkelsen T.S."/>
            <person name="Zody M.C."/>
            <person name="Asakawa S."/>
            <person name="Taudien S."/>
            <person name="Garber M."/>
            <person name="Kodira C.D."/>
            <person name="Schueler M.G."/>
            <person name="Shimizu A."/>
            <person name="Whittaker C.A."/>
            <person name="Chang J.L."/>
            <person name="Cuomo C.A."/>
            <person name="Dewar K."/>
            <person name="FitzGerald M.G."/>
            <person name="Yang X."/>
            <person name="Allen N.R."/>
            <person name="Anderson S."/>
            <person name="Asakawa T."/>
            <person name="Blechschmidt K."/>
            <person name="Bloom T."/>
            <person name="Borowsky M.L."/>
            <person name="Butler J."/>
            <person name="Cook A."/>
            <person name="Corum B."/>
            <person name="DeArellano K."/>
            <person name="DeCaprio D."/>
            <person name="Dooley K.T."/>
            <person name="Dorris L. III"/>
            <person name="Engels R."/>
            <person name="Gloeckner G."/>
            <person name="Hafez N."/>
            <person name="Hagopian D.S."/>
            <person name="Hall J.L."/>
            <person name="Ishikawa S.K."/>
            <person name="Jaffe D.B."/>
            <person name="Kamat A."/>
            <person name="Kudoh J."/>
            <person name="Lehmann R."/>
            <person name="Lokitsang T."/>
            <person name="Macdonald P."/>
            <person name="Major J.E."/>
            <person name="Matthews C.D."/>
            <person name="Mauceli E."/>
            <person name="Menzel U."/>
            <person name="Mihalev A.H."/>
            <person name="Minoshima S."/>
            <person name="Murayama Y."/>
            <person name="Naylor J.W."/>
            <person name="Nicol R."/>
            <person name="Nguyen C."/>
            <person name="O'Leary S.B."/>
            <person name="O'Neill K."/>
            <person name="Parker S.C.J."/>
            <person name="Polley A."/>
            <person name="Raymond C.K."/>
            <person name="Reichwald K."/>
            <person name="Rodriguez J."/>
            <person name="Sasaki T."/>
            <person name="Schilhabel M."/>
            <person name="Siddiqui R."/>
            <person name="Smith C.L."/>
            <person name="Sneddon T.P."/>
            <person name="Talamas J.A."/>
            <person name="Tenzin P."/>
            <person name="Topham K."/>
            <person name="Venkataraman V."/>
            <person name="Wen G."/>
            <person name="Yamazaki S."/>
            <person name="Young S.K."/>
            <person name="Zeng Q."/>
            <person name="Zimmer A.R."/>
            <person name="Rosenthal A."/>
            <person name="Birren B.W."/>
            <person name="Platzer M."/>
            <person name="Shimizu N."/>
            <person name="Lander E.S."/>
        </authorList>
    </citation>
    <scope>NUCLEOTIDE SEQUENCE [LARGE SCALE GENOMIC DNA]</scope>
</reference>
<reference key="4">
    <citation type="submission" date="2005-09" db="EMBL/GenBank/DDBJ databases">
        <authorList>
            <person name="Mural R.J."/>
            <person name="Istrail S."/>
            <person name="Sutton G.G."/>
            <person name="Florea L."/>
            <person name="Halpern A.L."/>
            <person name="Mobarry C.M."/>
            <person name="Lippert R."/>
            <person name="Walenz B."/>
            <person name="Shatkay H."/>
            <person name="Dew I."/>
            <person name="Miller J.R."/>
            <person name="Flanigan M.J."/>
            <person name="Edwards N.J."/>
            <person name="Bolanos R."/>
            <person name="Fasulo D."/>
            <person name="Halldorsson B.V."/>
            <person name="Hannenhalli S."/>
            <person name="Turner R."/>
            <person name="Yooseph S."/>
            <person name="Lu F."/>
            <person name="Nusskern D.R."/>
            <person name="Shue B.C."/>
            <person name="Zheng X.H."/>
            <person name="Zhong F."/>
            <person name="Delcher A.L."/>
            <person name="Huson D.H."/>
            <person name="Kravitz S.A."/>
            <person name="Mouchard L."/>
            <person name="Reinert K."/>
            <person name="Remington K.A."/>
            <person name="Clark A.G."/>
            <person name="Waterman M.S."/>
            <person name="Eichler E.E."/>
            <person name="Adams M.D."/>
            <person name="Hunkapiller M.W."/>
            <person name="Myers E.W."/>
            <person name="Venter J.C."/>
        </authorList>
    </citation>
    <scope>NUCLEOTIDE SEQUENCE [LARGE SCALE GENOMIC DNA]</scope>
</reference>
<reference key="5">
    <citation type="journal article" date="2004" name="Genome Res.">
        <title>The status, quality, and expansion of the NIH full-length cDNA project: the Mammalian Gene Collection (MGC).</title>
        <authorList>
            <consortium name="The MGC Project Team"/>
        </authorList>
    </citation>
    <scope>PARTIAL NUCLEOTIDE SEQUENCE [LARGE SCALE MRNA] (ISOFORMS 2 AND 3)</scope>
    <scope>VARIANT THR-531</scope>
    <source>
        <tissue>Liver</tissue>
    </source>
</reference>
<reference key="6">
    <citation type="journal article" date="2007" name="BMC Genomics">
        <title>The full-ORF clone resource of the German cDNA consortium.</title>
        <authorList>
            <person name="Bechtel S."/>
            <person name="Rosenfelder H."/>
            <person name="Duda A."/>
            <person name="Schmidt C.P."/>
            <person name="Ernst U."/>
            <person name="Wellenreuther R."/>
            <person name="Mehrle A."/>
            <person name="Schuster C."/>
            <person name="Bahr A."/>
            <person name="Bloecker H."/>
            <person name="Heubner D."/>
            <person name="Hoerlein A."/>
            <person name="Michel G."/>
            <person name="Wedler H."/>
            <person name="Koehrer K."/>
            <person name="Ottenwaelder B."/>
            <person name="Poustka A."/>
            <person name="Wiemann S."/>
            <person name="Schupp I."/>
        </authorList>
    </citation>
    <scope>NUCLEOTIDE SEQUENCE [LARGE SCALE MRNA] OF 313-658 (ISOFORM 2)</scope>
    <source>
        <tissue>Skeletal muscle</tissue>
    </source>
</reference>
<reference key="7">
    <citation type="journal article" date="2008" name="Proc. Natl. Acad. Sci. U.S.A.">
        <title>A quantitative atlas of mitotic phosphorylation.</title>
        <authorList>
            <person name="Dephoure N."/>
            <person name="Zhou C."/>
            <person name="Villen J."/>
            <person name="Beausoleil S.A."/>
            <person name="Bakalarski C.E."/>
            <person name="Elledge S.J."/>
            <person name="Gygi S.P."/>
        </authorList>
    </citation>
    <scope>PHOSPHORYLATION [LARGE SCALE ANALYSIS] AT SER-646</scope>
    <scope>IDENTIFICATION BY MASS SPECTROMETRY [LARGE SCALE ANALYSIS]</scope>
    <source>
        <tissue>Cervix carcinoma</tissue>
    </source>
</reference>
<reference key="8">
    <citation type="journal article" date="2010" name="Sci. Signal.">
        <title>Quantitative phosphoproteomics reveals widespread full phosphorylation site occupancy during mitosis.</title>
        <authorList>
            <person name="Olsen J.V."/>
            <person name="Vermeulen M."/>
            <person name="Santamaria A."/>
            <person name="Kumar C."/>
            <person name="Miller M.L."/>
            <person name="Jensen L.J."/>
            <person name="Gnad F."/>
            <person name="Cox J."/>
            <person name="Jensen T.S."/>
            <person name="Nigg E.A."/>
            <person name="Brunak S."/>
            <person name="Mann M."/>
        </authorList>
    </citation>
    <scope>PHOSPHORYLATION [LARGE SCALE ANALYSIS] AT SER-455</scope>
    <scope>IDENTIFICATION BY MASS SPECTROMETRY [LARGE SCALE ANALYSIS]</scope>
    <source>
        <tissue>Cervix carcinoma</tissue>
    </source>
</reference>
<reference key="9">
    <citation type="journal article" date="2013" name="J. Proteome Res.">
        <title>Toward a comprehensive characterization of a human cancer cell phosphoproteome.</title>
        <authorList>
            <person name="Zhou H."/>
            <person name="Di Palma S."/>
            <person name="Preisinger C."/>
            <person name="Peng M."/>
            <person name="Polat A.N."/>
            <person name="Heck A.J."/>
            <person name="Mohammed S."/>
        </authorList>
    </citation>
    <scope>PHOSPHORYLATION [LARGE SCALE ANALYSIS] AT SER-24; THR-28; SER-446; SER-464; SER-646 AND SER-647</scope>
    <scope>IDENTIFICATION BY MASS SPECTROMETRY [LARGE SCALE ANALYSIS]</scope>
    <source>
        <tissue>Cervix carcinoma</tissue>
    </source>
</reference>
<reference key="10">
    <citation type="journal article" date="2014" name="J. Proteomics">
        <title>An enzyme assisted RP-RPLC approach for in-depth analysis of human liver phosphoproteome.</title>
        <authorList>
            <person name="Bian Y."/>
            <person name="Song C."/>
            <person name="Cheng K."/>
            <person name="Dong M."/>
            <person name="Wang F."/>
            <person name="Huang J."/>
            <person name="Sun D."/>
            <person name="Wang L."/>
            <person name="Ye M."/>
            <person name="Zou H."/>
        </authorList>
    </citation>
    <scope>PHOSPHORYLATION [LARGE SCALE ANALYSIS] AT SER-646</scope>
    <scope>IDENTIFICATION BY MASS SPECTROMETRY [LARGE SCALE ANALYSIS]</scope>
    <source>
        <tissue>Liver</tissue>
    </source>
</reference>
<reference key="11">
    <citation type="journal article" date="2017" name="Sci. Rep.">
        <title>The prognostic biomarker L-homoarginine is a substrate of the cationic amino acid transporters CAT1, CAT2A and CAT2B.</title>
        <authorList>
            <person name="Chafai A."/>
            <person name="Fromm M.F."/>
            <person name="Koenig J."/>
            <person name="Maas R."/>
        </authorList>
    </citation>
    <scope>FUNCTION</scope>
    <scope>TRANSPORTER ACTIVITY</scope>
    <scope>BIOPHYSICOCHEMICAL PROPERTIES</scope>
</reference>
<sequence>MIPCRAALTFARCLIRRKIVTLDSLEDTKLCRCLSTMDLIALGVGSTLGAGVYVLAGEVAKADSGPSIVVSFLIAALASVMAGLCYAEFGARVPKTGSAYLYTYVTVGELWAFITGWNLILSYVIGTSSVARAWSGTFDELLSKQIGQFLRTYFRMNYTGLAEYPDFFAVCLILLLAGLLSFGVKESAWVNKVFTAVNILVLLFVMVAGFVKGNVANWKISEEFLKNISASAREPPSENGTSIYGAGGFMPYGFTGTLAGAATCFYAFVGFDCIATTGEEVRNPQKAIPIGIVTSLLVCFMAYFGVSAALTLMMPYYLLDEKSPLPVAFEYVGWGPAKYVVAAGSLCALSTSLLGSIFPMPRVIYAMAEDGLLFKCLAQINSKTKTPIIATLSSGAVAALMAFLFDLKALVDMMSIGTLMAYSLVAACVLILRYQPGLSYDQPKCSPEKDGLGSSPRVTSKSESQVTMLQRQGFSMRTLFCPSLLPTQQSASLVSFLVGFLAFLVLGLSVLTTYGVHAITRLEAWSLALLALFLVLFVAIVLTIWRQPQNQQKVAFMVPFLPFLPAFSILVNIYLMVQLSADTWVRFSIWMAIGFLIYFSYGIRHSLEGHLRDENNEEDAYPDNVHAAAEEKSAIQANDHHPRNLSSPFIFHEKTSEF</sequence>
<feature type="chain" id="PRO_0000054264" description="Cationic amino acid transporter 2">
    <location>
        <begin position="1"/>
        <end position="658"/>
    </location>
</feature>
<feature type="topological domain" description="Cytoplasmic" evidence="2">
    <location>
        <begin position="1"/>
        <end position="37"/>
    </location>
</feature>
<feature type="transmembrane region" description="Helical" evidence="2">
    <location>
        <begin position="38"/>
        <end position="59"/>
    </location>
</feature>
<feature type="topological domain" description="Extracellular" evidence="2">
    <location>
        <begin position="60"/>
        <end position="63"/>
    </location>
</feature>
<feature type="transmembrane region" description="Helical" evidence="2">
    <location>
        <begin position="64"/>
        <end position="84"/>
    </location>
</feature>
<feature type="topological domain" description="Cytoplasmic" evidence="2">
    <location>
        <begin position="85"/>
        <end position="104"/>
    </location>
</feature>
<feature type="transmembrane region" description="Helical" evidence="2">
    <location>
        <begin position="105"/>
        <end position="125"/>
    </location>
</feature>
<feature type="topological domain" description="Extracellular" evidence="2">
    <location>
        <begin position="126"/>
        <end position="163"/>
    </location>
</feature>
<feature type="transmembrane region" description="Helical" evidence="2">
    <location>
        <begin position="164"/>
        <end position="184"/>
    </location>
</feature>
<feature type="topological domain" description="Cytoplasmic" evidence="2">
    <location>
        <begin position="185"/>
        <end position="192"/>
    </location>
</feature>
<feature type="transmembrane region" description="Helical" evidence="2">
    <location>
        <begin position="193"/>
        <end position="213"/>
    </location>
</feature>
<feature type="topological domain" description="Extracellular" evidence="2">
    <location>
        <begin position="214"/>
        <end position="248"/>
    </location>
</feature>
<feature type="transmembrane region" description="Helical" evidence="2">
    <location>
        <begin position="249"/>
        <end position="269"/>
    </location>
</feature>
<feature type="topological domain" description="Cytoplasmic" evidence="2">
    <location>
        <begin position="270"/>
        <end position="289"/>
    </location>
</feature>
<feature type="transmembrane region" description="Helical" evidence="2">
    <location>
        <begin position="290"/>
        <end position="309"/>
    </location>
</feature>
<feature type="topological domain" description="Extracellular" evidence="2">
    <location>
        <begin position="310"/>
        <end position="339"/>
    </location>
</feature>
<feature type="transmembrane region" description="Helical" evidence="2">
    <location>
        <begin position="340"/>
        <end position="360"/>
    </location>
</feature>
<feature type="topological domain" description="Cytoplasmic" evidence="2">
    <location>
        <begin position="361"/>
        <end position="386"/>
    </location>
</feature>
<feature type="transmembrane region" description="Helical" evidence="2">
    <location>
        <begin position="387"/>
        <end position="407"/>
    </location>
</feature>
<feature type="topological domain" description="Extracellular" evidence="2">
    <location>
        <begin position="408"/>
        <end position="410"/>
    </location>
</feature>
<feature type="transmembrane region" description="Helical" evidence="2">
    <location>
        <begin position="411"/>
        <end position="431"/>
    </location>
</feature>
<feature type="topological domain" description="Cytoplasmic" evidence="2">
    <location>
        <begin position="432"/>
        <end position="490"/>
    </location>
</feature>
<feature type="transmembrane region" description="Helical" evidence="2">
    <location>
        <begin position="491"/>
        <end position="511"/>
    </location>
</feature>
<feature type="topological domain" description="Extracellular" evidence="2">
    <location>
        <begin position="512"/>
        <end position="524"/>
    </location>
</feature>
<feature type="transmembrane region" description="Helical" evidence="2">
    <location>
        <begin position="525"/>
        <end position="549"/>
    </location>
</feature>
<feature type="topological domain" description="Cytoplasmic" evidence="2">
    <location>
        <begin position="550"/>
        <end position="557"/>
    </location>
</feature>
<feature type="transmembrane region" description="Helical" evidence="2">
    <location>
        <begin position="558"/>
        <end position="578"/>
    </location>
</feature>
<feature type="topological domain" description="Extracellular" evidence="2">
    <location>
        <begin position="579"/>
        <end position="582"/>
    </location>
</feature>
<feature type="transmembrane region" description="Helical" evidence="2">
    <location>
        <begin position="583"/>
        <end position="603"/>
    </location>
</feature>
<feature type="topological domain" description="Cytoplasmic" evidence="2">
    <location>
        <begin position="604"/>
        <end position="658"/>
    </location>
</feature>
<feature type="modified residue" description="Phosphoserine" evidence="14">
    <location>
        <position position="24"/>
    </location>
</feature>
<feature type="modified residue" description="Phosphothreonine" evidence="14">
    <location>
        <position position="28"/>
    </location>
</feature>
<feature type="modified residue" description="Phosphoserine" evidence="14">
    <location>
        <position position="446"/>
    </location>
</feature>
<feature type="modified residue" description="Phosphoserine" evidence="13">
    <location>
        <position position="455"/>
    </location>
</feature>
<feature type="modified residue" description="Phosphoserine" evidence="14">
    <location>
        <position position="464"/>
    </location>
</feature>
<feature type="modified residue" description="Phosphoserine" evidence="12 14 15">
    <location>
        <position position="646"/>
    </location>
</feature>
<feature type="modified residue" description="Phosphoserine" evidence="14">
    <location>
        <position position="647"/>
    </location>
</feature>
<feature type="glycosylation site" description="N-linked (GlcNAc...) asparagine" evidence="2">
    <location>
        <position position="157"/>
    </location>
</feature>
<feature type="glycosylation site" description="N-linked (GlcNAc...) asparagine" evidence="2">
    <location>
        <position position="227"/>
    </location>
</feature>
<feature type="glycosylation site" description="N-linked (GlcNAc...) asparagine" evidence="2">
    <location>
        <position position="239"/>
    </location>
</feature>
<feature type="splice variant" id="VSP_037354" description="In isoform 2 and isoform 3." evidence="7 9">
    <original>M</original>
    <variation>MKIETSGYNSDKLICRGFIGTPAPPVCDSKFLLSPSSDVRM</variation>
    <location>
        <position position="1"/>
    </location>
</feature>
<feature type="splice variant" id="VSP_023354" description="In isoform 2." evidence="7 9">
    <original>IFPMPRVIYAMAEDGLLFKCLAQINSKTKTPIIATLSSGAVA</original>
    <variation>MFPLPRILFAMARDGLLFRFLARVSKRQSPVAATLTAGVIS</variation>
    <location>
        <begin position="357"/>
        <end position="398"/>
    </location>
</feature>
<feature type="sequence variant" id="VAR_030799" description="In dbSNP:rs12680645.">
    <original>V</original>
    <variation>M</variation>
    <location>
        <position position="20"/>
    </location>
</feature>
<feature type="sequence variant" id="VAR_030800" description="In dbSNP:rs1134975.">
    <original>C</original>
    <variation>F</variation>
    <location>
        <position position="376"/>
    </location>
</feature>
<feature type="sequence variant" id="VAR_030801" description="In dbSNP:rs62622371." evidence="3 6">
    <original>A</original>
    <variation>T</variation>
    <location>
        <position position="531"/>
    </location>
</feature>
<feature type="sequence variant" id="VAR_058414" description="In dbSNP:rs1981498.">
    <original>Q</original>
    <variation>L</variation>
    <location>
        <position position="547"/>
    </location>
</feature>
<feature type="sequence conflict" description="In Ref. 1; BAA06271." evidence="10" ref="1">
    <original>W</original>
    <variation>G</variation>
    <location>
        <position position="134"/>
    </location>
</feature>
<feature type="sequence conflict" description="In Ref. 1; BAA06271." evidence="10" ref="1">
    <original>I</original>
    <variation>N</variation>
    <location>
        <position position="364"/>
    </location>
</feature>
<feature type="sequence conflict" description="In Ref. 1; BAA06271." evidence="10" ref="1">
    <original>T</original>
    <variation>Y</variation>
    <location>
        <position position="520"/>
    </location>
</feature>
<feature type="sequence conflict" description="In Ref. 1; BAA06271." evidence="10" ref="1">
    <original>Q</original>
    <variation>R</variation>
    <location>
        <position position="552"/>
    </location>
</feature>
<feature type="sequence conflict" description="In Ref. 1; BAA06271." evidence="10" ref="1">
    <original>A</original>
    <variation>T</variation>
    <location>
        <position position="566"/>
    </location>
</feature>
<feature type="sequence conflict" description="In Ref. 1; BAA06271." evidence="10" ref="1">
    <original>S</original>
    <variation>T</variation>
    <location>
        <position position="568"/>
    </location>
</feature>
<feature type="sequence conflict" description="In Ref. 6; CAD89909." evidence="10" ref="6">
    <original>H</original>
    <variation>R</variation>
    <location>
        <position position="605"/>
    </location>
</feature>
<feature type="sequence conflict" description="In Ref. 6; CAD89909." evidence="10" ref="6">
    <original>D</original>
    <variation>V</variation>
    <location>
        <position position="619"/>
    </location>
</feature>
<evidence type="ECO:0000250" key="1">
    <source>
        <dbReference type="UniProtKB" id="P18581"/>
    </source>
</evidence>
<evidence type="ECO:0000255" key="2"/>
<evidence type="ECO:0000269" key="3">
    <source>
    </source>
</evidence>
<evidence type="ECO:0000269" key="4">
    <source>
    </source>
</evidence>
<evidence type="ECO:0000269" key="5">
    <source>
    </source>
</evidence>
<evidence type="ECO:0000269" key="6">
    <source>
    </source>
</evidence>
<evidence type="ECO:0000303" key="7">
    <source>
    </source>
</evidence>
<evidence type="ECO:0000303" key="8">
    <source>
    </source>
</evidence>
<evidence type="ECO:0000303" key="9">
    <source>
    </source>
</evidence>
<evidence type="ECO:0000305" key="10"/>
<evidence type="ECO:0000312" key="11">
    <source>
        <dbReference type="HGNC" id="HGNC:11060"/>
    </source>
</evidence>
<evidence type="ECO:0007744" key="12">
    <source>
    </source>
</evidence>
<evidence type="ECO:0007744" key="13">
    <source>
    </source>
</evidence>
<evidence type="ECO:0007744" key="14">
    <source>
    </source>
</evidence>
<evidence type="ECO:0007744" key="15">
    <source>
    </source>
</evidence>
<proteinExistence type="evidence at protein level"/>
<keyword id="KW-0025">Alternative splicing</keyword>
<keyword id="KW-0029">Amino-acid transport</keyword>
<keyword id="KW-1003">Cell membrane</keyword>
<keyword id="KW-0325">Glycoprotein</keyword>
<keyword id="KW-0472">Membrane</keyword>
<keyword id="KW-0597">Phosphoprotein</keyword>
<keyword id="KW-1267">Proteomics identification</keyword>
<keyword id="KW-1185">Reference proteome</keyword>
<keyword id="KW-0812">Transmembrane</keyword>
<keyword id="KW-1133">Transmembrane helix</keyword>
<keyword id="KW-0813">Transport</keyword>
<name>CTR2_HUMAN</name>
<organism>
    <name type="scientific">Homo sapiens</name>
    <name type="common">Human</name>
    <dbReference type="NCBI Taxonomy" id="9606"/>
    <lineage>
        <taxon>Eukaryota</taxon>
        <taxon>Metazoa</taxon>
        <taxon>Chordata</taxon>
        <taxon>Craniata</taxon>
        <taxon>Vertebrata</taxon>
        <taxon>Euteleostomi</taxon>
        <taxon>Mammalia</taxon>
        <taxon>Eutheria</taxon>
        <taxon>Euarchontoglires</taxon>
        <taxon>Primates</taxon>
        <taxon>Haplorrhini</taxon>
        <taxon>Catarrhini</taxon>
        <taxon>Hominidae</taxon>
        <taxon>Homo</taxon>
    </lineage>
</organism>
<accession>P52569</accession>
<accession>B7ZL54</accession>
<accession>O15291</accession>
<accession>O15292</accession>
<accession>Q14CQ6</accession>
<accession>Q6NSZ7</accession>
<accession>Q86TC6</accession>
<gene>
    <name evidence="11" type="primary">SLC7A2</name>
    <name type="synonym">ATRC2</name>
    <name evidence="8" type="synonym">CAT2</name>
</gene>